<reference key="1">
    <citation type="journal article" date="2009" name="BMC Genomics">
        <title>Pseudogene accumulation in the evolutionary histories of Salmonella enterica serovars Paratyphi A and Typhi.</title>
        <authorList>
            <person name="Holt K.E."/>
            <person name="Thomson N.R."/>
            <person name="Wain J."/>
            <person name="Langridge G.C."/>
            <person name="Hasan R."/>
            <person name="Bhutta Z.A."/>
            <person name="Quail M.A."/>
            <person name="Norbertczak H."/>
            <person name="Walker D."/>
            <person name="Simmonds M."/>
            <person name="White B."/>
            <person name="Bason N."/>
            <person name="Mungall K."/>
            <person name="Dougan G."/>
            <person name="Parkhill J."/>
        </authorList>
    </citation>
    <scope>NUCLEOTIDE SEQUENCE [LARGE SCALE GENOMIC DNA]</scope>
    <source>
        <strain>AKU_12601</strain>
    </source>
</reference>
<keyword id="KW-0556">Organic radical</keyword>
<evidence type="ECO:0000255" key="1">
    <source>
        <dbReference type="HAMAP-Rule" id="MF_00806"/>
    </source>
</evidence>
<organism>
    <name type="scientific">Salmonella paratyphi A (strain AKU_12601)</name>
    <dbReference type="NCBI Taxonomy" id="554290"/>
    <lineage>
        <taxon>Bacteria</taxon>
        <taxon>Pseudomonadati</taxon>
        <taxon>Pseudomonadota</taxon>
        <taxon>Gammaproteobacteria</taxon>
        <taxon>Enterobacterales</taxon>
        <taxon>Enterobacteriaceae</taxon>
        <taxon>Salmonella</taxon>
    </lineage>
</organism>
<feature type="chain" id="PRO_1000133999" description="Autonomous glycyl radical cofactor">
    <location>
        <begin position="1"/>
        <end position="127"/>
    </location>
</feature>
<feature type="domain" description="Glycine radical" evidence="1">
    <location>
        <begin position="5"/>
        <end position="127"/>
    </location>
</feature>
<feature type="modified residue" description="Glycine radical" evidence="1">
    <location>
        <position position="102"/>
    </location>
</feature>
<name>GRCA_SALPK</name>
<gene>
    <name evidence="1" type="primary">grcA</name>
    <name type="ordered locus">SSPA0257</name>
</gene>
<sequence length="127" mass="14344">MITGIQITKAANDDLLNSFWLLDSEKGEARCIVAKSGFAEDEVVAVSKLGEIEYREIPMEVKPEVRVEGGQHLNVNVLRRETLEDAVKHPEKYPQLTIRVSGYAVRFNSLTPEQQRDVIARTFTESL</sequence>
<accession>B5BAR8</accession>
<protein>
    <recommendedName>
        <fullName evidence="1">Autonomous glycyl radical cofactor</fullName>
    </recommendedName>
</protein>
<proteinExistence type="inferred from homology"/>
<comment type="function">
    <text evidence="1">Acts as a radical domain for damaged PFL and possibly other radical proteins.</text>
</comment>
<dbReference type="EMBL" id="FM200053">
    <property type="protein sequence ID" value="CAR58372.1"/>
    <property type="molecule type" value="Genomic_DNA"/>
</dbReference>
<dbReference type="RefSeq" id="WP_000627811.1">
    <property type="nucleotide sequence ID" value="NC_011147.1"/>
</dbReference>
<dbReference type="SMR" id="B5BAR8"/>
<dbReference type="GeneID" id="66757020"/>
<dbReference type="KEGG" id="sek:SSPA0257"/>
<dbReference type="HOGENOM" id="CLU_133780_0_0_6"/>
<dbReference type="Proteomes" id="UP000001869">
    <property type="component" value="Chromosome"/>
</dbReference>
<dbReference type="GO" id="GO:0005829">
    <property type="term" value="C:cytosol"/>
    <property type="evidence" value="ECO:0007669"/>
    <property type="project" value="TreeGrafter"/>
</dbReference>
<dbReference type="GO" id="GO:0008861">
    <property type="term" value="F:formate C-acetyltransferase activity"/>
    <property type="evidence" value="ECO:0007669"/>
    <property type="project" value="TreeGrafter"/>
</dbReference>
<dbReference type="FunFam" id="3.20.70.20:FF:000002">
    <property type="entry name" value="Autonomous glycyl radical cofactor"/>
    <property type="match status" value="1"/>
</dbReference>
<dbReference type="Gene3D" id="3.20.70.20">
    <property type="match status" value="1"/>
</dbReference>
<dbReference type="HAMAP" id="MF_00806">
    <property type="entry name" value="GrcA"/>
    <property type="match status" value="1"/>
</dbReference>
<dbReference type="InterPro" id="IPR050244">
    <property type="entry name" value="Auton_GlycylRad_Cofactor"/>
</dbReference>
<dbReference type="InterPro" id="IPR019777">
    <property type="entry name" value="Form_AcTrfase_GR_CS"/>
</dbReference>
<dbReference type="InterPro" id="IPR001150">
    <property type="entry name" value="Gly_radical"/>
</dbReference>
<dbReference type="InterPro" id="IPR011140">
    <property type="entry name" value="Glycyl_radical_cofactor_GrcA"/>
</dbReference>
<dbReference type="NCBIfam" id="TIGR04365">
    <property type="entry name" value="spare_glycyl"/>
    <property type="match status" value="1"/>
</dbReference>
<dbReference type="PANTHER" id="PTHR30191">
    <property type="entry name" value="FORMATE ACETYLTRANSFERASE"/>
    <property type="match status" value="1"/>
</dbReference>
<dbReference type="PANTHER" id="PTHR30191:SF0">
    <property type="entry name" value="FORMATE ACETYLTRANSFERASE 1"/>
    <property type="match status" value="1"/>
</dbReference>
<dbReference type="Pfam" id="PF01228">
    <property type="entry name" value="Gly_radical"/>
    <property type="match status" value="1"/>
</dbReference>
<dbReference type="PIRSF" id="PIRSF000378">
    <property type="entry name" value="Gly_radicl_yfiD"/>
    <property type="match status" value="1"/>
</dbReference>
<dbReference type="SUPFAM" id="SSF51998">
    <property type="entry name" value="PFL-like glycyl radical enzymes"/>
    <property type="match status" value="1"/>
</dbReference>
<dbReference type="PROSITE" id="PS00850">
    <property type="entry name" value="GLY_RADICAL_1"/>
    <property type="match status" value="1"/>
</dbReference>
<dbReference type="PROSITE" id="PS51149">
    <property type="entry name" value="GLY_RADICAL_2"/>
    <property type="match status" value="1"/>
</dbReference>